<reference key="1">
    <citation type="journal article" date="2007" name="Genome Res.">
        <title>Genome characteristics of facultatively symbiotic Frankia sp. strains reflect host range and host plant biogeography.</title>
        <authorList>
            <person name="Normand P."/>
            <person name="Lapierre P."/>
            <person name="Tisa L.S."/>
            <person name="Gogarten J.P."/>
            <person name="Alloisio N."/>
            <person name="Bagnarol E."/>
            <person name="Bassi C.A."/>
            <person name="Berry A.M."/>
            <person name="Bickhart D.M."/>
            <person name="Choisne N."/>
            <person name="Couloux A."/>
            <person name="Cournoyer B."/>
            <person name="Cruveiller S."/>
            <person name="Daubin V."/>
            <person name="Demange N."/>
            <person name="Francino M.P."/>
            <person name="Goltsman E."/>
            <person name="Huang Y."/>
            <person name="Kopp O.R."/>
            <person name="Labarre L."/>
            <person name="Lapidus A."/>
            <person name="Lavire C."/>
            <person name="Marechal J."/>
            <person name="Martinez M."/>
            <person name="Mastronunzio J.E."/>
            <person name="Mullin B.C."/>
            <person name="Niemann J."/>
            <person name="Pujic P."/>
            <person name="Rawnsley T."/>
            <person name="Rouy Z."/>
            <person name="Schenowitz C."/>
            <person name="Sellstedt A."/>
            <person name="Tavares F."/>
            <person name="Tomkins J.P."/>
            <person name="Vallenet D."/>
            <person name="Valverde C."/>
            <person name="Wall L.G."/>
            <person name="Wang Y."/>
            <person name="Medigue C."/>
            <person name="Benson D.R."/>
        </authorList>
    </citation>
    <scope>NUCLEOTIDE SEQUENCE [LARGE SCALE GENOMIC DNA]</scope>
    <source>
        <strain>DSM 45818 / CECT 9043 / HFP020203 / CcI3</strain>
    </source>
</reference>
<feature type="chain" id="PRO_0000241225" description="Aspartyl/glutamyl-tRNA(Asn/Gln) amidotransferase subunit B">
    <location>
        <begin position="1"/>
        <end position="505"/>
    </location>
</feature>
<feature type="region of interest" description="Disordered" evidence="2">
    <location>
        <begin position="220"/>
        <end position="241"/>
    </location>
</feature>
<gene>
    <name evidence="1" type="primary">gatB</name>
    <name type="ordered locus">Francci3_3642</name>
</gene>
<proteinExistence type="inferred from homology"/>
<comment type="function">
    <text evidence="1">Allows the formation of correctly charged Asn-tRNA(Asn) or Gln-tRNA(Gln) through the transamidation of misacylated Asp-tRNA(Asn) or Glu-tRNA(Gln) in organisms which lack either or both of asparaginyl-tRNA or glutaminyl-tRNA synthetases. The reaction takes place in the presence of glutamine and ATP through an activated phospho-Asp-tRNA(Asn) or phospho-Glu-tRNA(Gln).</text>
</comment>
<comment type="catalytic activity">
    <reaction evidence="1">
        <text>L-glutamyl-tRNA(Gln) + L-glutamine + ATP + H2O = L-glutaminyl-tRNA(Gln) + L-glutamate + ADP + phosphate + H(+)</text>
        <dbReference type="Rhea" id="RHEA:17521"/>
        <dbReference type="Rhea" id="RHEA-COMP:9681"/>
        <dbReference type="Rhea" id="RHEA-COMP:9684"/>
        <dbReference type="ChEBI" id="CHEBI:15377"/>
        <dbReference type="ChEBI" id="CHEBI:15378"/>
        <dbReference type="ChEBI" id="CHEBI:29985"/>
        <dbReference type="ChEBI" id="CHEBI:30616"/>
        <dbReference type="ChEBI" id="CHEBI:43474"/>
        <dbReference type="ChEBI" id="CHEBI:58359"/>
        <dbReference type="ChEBI" id="CHEBI:78520"/>
        <dbReference type="ChEBI" id="CHEBI:78521"/>
        <dbReference type="ChEBI" id="CHEBI:456216"/>
    </reaction>
</comment>
<comment type="catalytic activity">
    <reaction evidence="1">
        <text>L-aspartyl-tRNA(Asn) + L-glutamine + ATP + H2O = L-asparaginyl-tRNA(Asn) + L-glutamate + ADP + phosphate + 2 H(+)</text>
        <dbReference type="Rhea" id="RHEA:14513"/>
        <dbReference type="Rhea" id="RHEA-COMP:9674"/>
        <dbReference type="Rhea" id="RHEA-COMP:9677"/>
        <dbReference type="ChEBI" id="CHEBI:15377"/>
        <dbReference type="ChEBI" id="CHEBI:15378"/>
        <dbReference type="ChEBI" id="CHEBI:29985"/>
        <dbReference type="ChEBI" id="CHEBI:30616"/>
        <dbReference type="ChEBI" id="CHEBI:43474"/>
        <dbReference type="ChEBI" id="CHEBI:58359"/>
        <dbReference type="ChEBI" id="CHEBI:78515"/>
        <dbReference type="ChEBI" id="CHEBI:78516"/>
        <dbReference type="ChEBI" id="CHEBI:456216"/>
    </reaction>
</comment>
<comment type="subunit">
    <text evidence="1">Heterotrimer of A, B and C subunits.</text>
</comment>
<comment type="similarity">
    <text evidence="1">Belongs to the GatB/GatE family. GatB subfamily.</text>
</comment>
<evidence type="ECO:0000255" key="1">
    <source>
        <dbReference type="HAMAP-Rule" id="MF_00121"/>
    </source>
</evidence>
<evidence type="ECO:0000256" key="2">
    <source>
        <dbReference type="SAM" id="MobiDB-lite"/>
    </source>
</evidence>
<name>GATB_FRACC</name>
<accession>Q2J6U8</accession>
<organism>
    <name type="scientific">Frankia casuarinae (strain DSM 45818 / CECT 9043 / HFP020203 / CcI3)</name>
    <dbReference type="NCBI Taxonomy" id="106370"/>
    <lineage>
        <taxon>Bacteria</taxon>
        <taxon>Bacillati</taxon>
        <taxon>Actinomycetota</taxon>
        <taxon>Actinomycetes</taxon>
        <taxon>Frankiales</taxon>
        <taxon>Frankiaceae</taxon>
        <taxon>Frankia</taxon>
    </lineage>
</organism>
<protein>
    <recommendedName>
        <fullName evidence="1">Aspartyl/glutamyl-tRNA(Asn/Gln) amidotransferase subunit B</fullName>
        <shortName evidence="1">Asp/Glu-ADT subunit B</shortName>
        <ecNumber evidence="1">6.3.5.-</ecNumber>
    </recommendedName>
</protein>
<keyword id="KW-0067">ATP-binding</keyword>
<keyword id="KW-0436">Ligase</keyword>
<keyword id="KW-0547">Nucleotide-binding</keyword>
<keyword id="KW-0648">Protein biosynthesis</keyword>
<keyword id="KW-1185">Reference proteome</keyword>
<sequence>MSTVAPAGALPSYSDVLARYEPVIGLETHVELGTASKMFCGCATAFGAEPNTQVCPVCLGLPGSLPVVNEAAVRFAVMIGLALHCEIASWCRFARKNYFYPDMPKNFQISQYDEPLCTNGWLDVEVEGEVHRVGITRVHMEEDTGKSLHVGGATGRIHGATHSLVDYNRAGIPLVEIVTEPDVRSPEVARAYVDELRELIRALGVSDVRMEQGSLRCDANVSLRPRPAPGDPDAPFGTRSETKNLNSLRSVERAVRYETTRQAALLDDGQRIIQETRHFDEASGRTSSGRSKEEATDYRYFPEPDLTPLALPAEYVERLRAGLPELPAARRARLIAEHGYTARDLQDLRNAAVLDLVEETIAAGAAPATARKWWLNELARRASDAGLQPRDLKITPTDVARITALVAAGELTDALARKVIDGVLAGEGTPDEVIAGRGLAIVADDSALTAAVDAALLGAPDIAEKVRGGKVNAVGPLVGAVMKAMKGQADAAAVRRLLLERLGVS</sequence>
<dbReference type="EC" id="6.3.5.-" evidence="1"/>
<dbReference type="EMBL" id="CP000249">
    <property type="protein sequence ID" value="ABD12994.1"/>
    <property type="molecule type" value="Genomic_DNA"/>
</dbReference>
<dbReference type="RefSeq" id="WP_011438018.1">
    <property type="nucleotide sequence ID" value="NZ_JENI01000005.1"/>
</dbReference>
<dbReference type="SMR" id="Q2J6U8"/>
<dbReference type="STRING" id="106370.Francci3_3642"/>
<dbReference type="KEGG" id="fra:Francci3_3642"/>
<dbReference type="eggNOG" id="COG0064">
    <property type="taxonomic scope" value="Bacteria"/>
</dbReference>
<dbReference type="HOGENOM" id="CLU_019240_0_0_11"/>
<dbReference type="OrthoDB" id="9804078at2"/>
<dbReference type="PhylomeDB" id="Q2J6U8"/>
<dbReference type="Proteomes" id="UP000001937">
    <property type="component" value="Chromosome"/>
</dbReference>
<dbReference type="GO" id="GO:0050566">
    <property type="term" value="F:asparaginyl-tRNA synthase (glutamine-hydrolyzing) activity"/>
    <property type="evidence" value="ECO:0007669"/>
    <property type="project" value="RHEA"/>
</dbReference>
<dbReference type="GO" id="GO:0005524">
    <property type="term" value="F:ATP binding"/>
    <property type="evidence" value="ECO:0007669"/>
    <property type="project" value="UniProtKB-KW"/>
</dbReference>
<dbReference type="GO" id="GO:0050567">
    <property type="term" value="F:glutaminyl-tRNA synthase (glutamine-hydrolyzing) activity"/>
    <property type="evidence" value="ECO:0007669"/>
    <property type="project" value="UniProtKB-UniRule"/>
</dbReference>
<dbReference type="GO" id="GO:0070681">
    <property type="term" value="P:glutaminyl-tRNAGln biosynthesis via transamidation"/>
    <property type="evidence" value="ECO:0007669"/>
    <property type="project" value="TreeGrafter"/>
</dbReference>
<dbReference type="GO" id="GO:0006412">
    <property type="term" value="P:translation"/>
    <property type="evidence" value="ECO:0007669"/>
    <property type="project" value="UniProtKB-UniRule"/>
</dbReference>
<dbReference type="Gene3D" id="1.10.10.410">
    <property type="match status" value="1"/>
</dbReference>
<dbReference type="HAMAP" id="MF_00121">
    <property type="entry name" value="GatB"/>
    <property type="match status" value="1"/>
</dbReference>
<dbReference type="InterPro" id="IPR017959">
    <property type="entry name" value="Asn/Gln-tRNA_amidoTrfase_suB/E"/>
</dbReference>
<dbReference type="InterPro" id="IPR006075">
    <property type="entry name" value="Asn/Gln-tRNA_Trfase_suB/E_cat"/>
</dbReference>
<dbReference type="InterPro" id="IPR018027">
    <property type="entry name" value="Asn/Gln_amidotransferase"/>
</dbReference>
<dbReference type="InterPro" id="IPR003789">
    <property type="entry name" value="Asn/Gln_tRNA_amidoTrase-B-like"/>
</dbReference>
<dbReference type="InterPro" id="IPR004413">
    <property type="entry name" value="GatB"/>
</dbReference>
<dbReference type="InterPro" id="IPR023168">
    <property type="entry name" value="GatB_Yqey_C_2"/>
</dbReference>
<dbReference type="InterPro" id="IPR017958">
    <property type="entry name" value="Gln-tRNA_amidoTrfase_suB_CS"/>
</dbReference>
<dbReference type="InterPro" id="IPR014746">
    <property type="entry name" value="Gln_synth/guanido_kin_cat_dom"/>
</dbReference>
<dbReference type="NCBIfam" id="TIGR00133">
    <property type="entry name" value="gatB"/>
    <property type="match status" value="1"/>
</dbReference>
<dbReference type="NCBIfam" id="NF004012">
    <property type="entry name" value="PRK05477.1-2"/>
    <property type="match status" value="1"/>
</dbReference>
<dbReference type="NCBIfam" id="NF004013">
    <property type="entry name" value="PRK05477.1-3"/>
    <property type="match status" value="1"/>
</dbReference>
<dbReference type="NCBIfam" id="NF004014">
    <property type="entry name" value="PRK05477.1-4"/>
    <property type="match status" value="1"/>
</dbReference>
<dbReference type="PANTHER" id="PTHR11659">
    <property type="entry name" value="GLUTAMYL-TRNA GLN AMIDOTRANSFERASE SUBUNIT B MITOCHONDRIAL AND PROKARYOTIC PET112-RELATED"/>
    <property type="match status" value="1"/>
</dbReference>
<dbReference type="PANTHER" id="PTHR11659:SF0">
    <property type="entry name" value="GLUTAMYL-TRNA(GLN) AMIDOTRANSFERASE SUBUNIT B, MITOCHONDRIAL"/>
    <property type="match status" value="1"/>
</dbReference>
<dbReference type="Pfam" id="PF02934">
    <property type="entry name" value="GatB_N"/>
    <property type="match status" value="1"/>
</dbReference>
<dbReference type="Pfam" id="PF02637">
    <property type="entry name" value="GatB_Yqey"/>
    <property type="match status" value="1"/>
</dbReference>
<dbReference type="SMART" id="SM00845">
    <property type="entry name" value="GatB_Yqey"/>
    <property type="match status" value="1"/>
</dbReference>
<dbReference type="SUPFAM" id="SSF89095">
    <property type="entry name" value="GatB/YqeY motif"/>
    <property type="match status" value="1"/>
</dbReference>
<dbReference type="SUPFAM" id="SSF55931">
    <property type="entry name" value="Glutamine synthetase/guanido kinase"/>
    <property type="match status" value="1"/>
</dbReference>
<dbReference type="PROSITE" id="PS01234">
    <property type="entry name" value="GATB"/>
    <property type="match status" value="1"/>
</dbReference>